<dbReference type="EMBL" id="AB110271">
    <property type="protein sequence ID" value="BAD07009.1"/>
    <property type="molecule type" value="Genomic_DNA"/>
</dbReference>
<dbReference type="EMBL" id="AP006628">
    <property type="protein sequence ID" value="BAD04207.1"/>
    <property type="molecule type" value="Genomic_DNA"/>
</dbReference>
<dbReference type="PIR" id="A58995">
    <property type="entry name" value="A58995"/>
</dbReference>
<dbReference type="SMR" id="Q7M1T6"/>
<dbReference type="STRING" id="262768.PAM_122"/>
<dbReference type="KEGG" id="poy:PAM_122"/>
<dbReference type="HOGENOM" id="CLU_1188981_0_0_14"/>
<dbReference type="BioCyc" id="OYEL262768:G1G26-154-MONOMER"/>
<dbReference type="Proteomes" id="UP000002523">
    <property type="component" value="Chromosome"/>
</dbReference>
<dbReference type="GO" id="GO:0005886">
    <property type="term" value="C:plasma membrane"/>
    <property type="evidence" value="ECO:0007669"/>
    <property type="project" value="UniProtKB-SubCell"/>
</dbReference>
<dbReference type="InterPro" id="IPR029216">
    <property type="entry name" value="Phyto-Amp"/>
</dbReference>
<dbReference type="Pfam" id="PF15438">
    <property type="entry name" value="Phyto-Amp"/>
    <property type="match status" value="1"/>
</dbReference>
<name>AMP_ONYPE</name>
<gene>
    <name type="primary">amp</name>
    <name type="ordered locus">PAM_122</name>
</gene>
<organism>
    <name type="scientific">Onion yellows phytoplasma (strain OY-M)</name>
    <dbReference type="NCBI Taxonomy" id="262768"/>
    <lineage>
        <taxon>Bacteria</taxon>
        <taxon>Bacillati</taxon>
        <taxon>Mycoplasmatota</taxon>
        <taxon>Mollicutes</taxon>
        <taxon>Acholeplasmatales</taxon>
        <taxon>Acholeplasmataceae</taxon>
        <taxon>Candidatus Phytoplasma</taxon>
        <taxon>16SrI (Aster yellows group)</taxon>
    </lineage>
</organism>
<sequence length="233" mass="24743">MQNQKNQKSLVAKVLVLFAAVALMFVGVQVFADDKLDLNTLECKDALELTAADAADAEKVVKQWKVQNTSLNAKVTKDSVKVAVADNKVTVTPADGDAGKALSGSKILNLVGVCELNKLTLGTEKKLTLTVKDGKVDAEAGLKALKEAGAKVPATVNKDDVTFTVGKDDNANKVTVKAVDGKTTVSGQVVFEFTVAKTPWYKTVWFLTLVAVVVVAAVAGGVFFFVKKNKKNK</sequence>
<proteinExistence type="evidence at protein level"/>
<reference evidence="4" key="1">
    <citation type="journal article" date="2004" name="Microbiology">
        <title>Secretion of immunodominant membrane protein from Onion yellows phytoplasma through the Sec protein-translocation system in Escherichia coli.</title>
        <authorList>
            <person name="Kakizawa S."/>
            <person name="Oshima K."/>
            <person name="Nishigawa H."/>
            <person name="Jung H.-Y."/>
            <person name="Wei W."/>
            <person name="Suzuki S."/>
            <person name="Tanaka M."/>
            <person name="Miyata S."/>
            <person name="Ugaki M."/>
            <person name="Namba S."/>
        </authorList>
    </citation>
    <scope>NUCLEOTIDE SEQUENCE [GENOMIC DNA]</scope>
</reference>
<reference key="2">
    <citation type="journal article" date="2004" name="Nat. Genet.">
        <title>Reductive evolution suggested from the complete genome sequence of a plant-pathogenic phytoplasma.</title>
        <authorList>
            <person name="Oshima K."/>
            <person name="Kakizawa S."/>
            <person name="Nishigawa H."/>
            <person name="Jung H.-Y."/>
            <person name="Wei W."/>
            <person name="Suzuki S."/>
            <person name="Arashida R."/>
            <person name="Nakata D."/>
            <person name="Miyata S."/>
            <person name="Ugaki M."/>
            <person name="Namba S."/>
        </authorList>
    </citation>
    <scope>NUCLEOTIDE SEQUENCE [LARGE SCALE GENOMIC DNA]</scope>
    <source>
        <strain>OY-M</strain>
    </source>
</reference>
<reference evidence="3" key="3">
    <citation type="submission" date="1999-07" db="UniProtKB">
        <title>Analysis of phytoplasmal proteins isolated by two dimensional gel electrophoresis.</title>
        <authorList>
            <person name="Zhon B."/>
            <person name="Tanaka M."/>
            <person name="Matsuda I."/>
        </authorList>
    </citation>
    <scope>PROTEIN SEQUENCE OF 33-73</scope>
    <source>
        <strain evidence="3">OY-W</strain>
    </source>
</reference>
<comment type="subcellular location">
    <subcellularLocation>
        <location evidence="3">Cell membrane</location>
        <topology evidence="3">Single-pass membrane protein</topology>
    </subcellularLocation>
</comment>
<feature type="signal peptide" evidence="2">
    <location>
        <begin position="1"/>
        <end position="32"/>
    </location>
</feature>
<feature type="chain" id="PRO_0000020723" description="Antigenic membrane protein" evidence="3">
    <location>
        <begin position="33"/>
        <end position="233"/>
    </location>
</feature>
<feature type="transmembrane region" description="Helical" evidence="1">
    <location>
        <begin position="206"/>
        <end position="226"/>
    </location>
</feature>
<feature type="sequence conflict" description="In Ref. 1; BAD07009." evidence="3" ref="1">
    <original>N</original>
    <variation>T</variation>
    <location>
        <position position="6"/>
    </location>
</feature>
<feature type="sequence conflict" description="In Ref. 1; BAD07009." evidence="3" ref="1">
    <original>N</original>
    <variation>S</variation>
    <location>
        <position position="39"/>
    </location>
</feature>
<feature type="sequence conflict" description="In Ref. 3; AA sequence." evidence="3" ref="3">
    <original>S</original>
    <variation>T</variation>
    <location>
        <position position="70"/>
    </location>
</feature>
<feature type="sequence conflict" description="In Ref. 1; BAD07009." evidence="3" ref="1">
    <original>ILN</original>
    <variation>VLS</variation>
    <location>
        <begin position="107"/>
        <end position="109"/>
    </location>
</feature>
<feature type="sequence conflict" description="In Ref. 1; BAD07009." evidence="3" ref="1">
    <original>E</original>
    <variation>D</variation>
    <location>
        <position position="124"/>
    </location>
</feature>
<feature type="sequence conflict" description="In Ref. 1; BAD07009." evidence="3" ref="1">
    <original>V</original>
    <variation>F</variation>
    <location>
        <position position="214"/>
    </location>
</feature>
<feature type="sequence conflict" description="In Ref. 1; BAD07009." evidence="3" ref="1">
    <original>K</original>
    <variation>N</variation>
    <location>
        <position position="231"/>
    </location>
</feature>
<keyword id="KW-1003">Cell membrane</keyword>
<keyword id="KW-0903">Direct protein sequencing</keyword>
<keyword id="KW-0472">Membrane</keyword>
<keyword id="KW-0732">Signal</keyword>
<keyword id="KW-0812">Transmembrane</keyword>
<keyword id="KW-1133">Transmembrane helix</keyword>
<accession>Q7M1T6</accession>
<accession>P81957</accession>
<protein>
    <recommendedName>
        <fullName>Antigenic membrane protein</fullName>
    </recommendedName>
    <alternativeName>
        <fullName>Immunodominant membrane protein</fullName>
    </alternativeName>
</protein>
<evidence type="ECO:0000255" key="1"/>
<evidence type="ECO:0000269" key="2">
    <source ref="3"/>
</evidence>
<evidence type="ECO:0000305" key="3"/>
<evidence type="ECO:0000312" key="4">
    <source>
        <dbReference type="EMBL" id="BAD07009.1"/>
    </source>
</evidence>